<accession>O83596</accession>
<name>Y587_TREPA</name>
<feature type="chain" id="PRO_0000202281" description="Uncharacterized protein TP_0587">
    <location>
        <begin position="1"/>
        <end position="76"/>
    </location>
</feature>
<sequence>MIAQYQRAASLWTLSDTHAILDRLFQTDAMIRSGGTPLQGPLMQLCLYAIVVHAGRAPHRYCTTLQEQCGLQNEIY</sequence>
<dbReference type="EMBL" id="AE000520">
    <property type="protein sequence ID" value="AAC65569.1"/>
    <property type="molecule type" value="Genomic_DNA"/>
</dbReference>
<dbReference type="PIR" id="D71305">
    <property type="entry name" value="D71305"/>
</dbReference>
<dbReference type="RefSeq" id="WP_010882033.1">
    <property type="nucleotide sequence ID" value="NC_000919.1"/>
</dbReference>
<dbReference type="IntAct" id="O83596">
    <property type="interactions" value="24"/>
</dbReference>
<dbReference type="STRING" id="243276.TP_0587"/>
<dbReference type="EnsemblBacteria" id="AAC65569">
    <property type="protein sequence ID" value="AAC65569"/>
    <property type="gene ID" value="TP_0587"/>
</dbReference>
<dbReference type="KEGG" id="tpa:TP_0587"/>
<dbReference type="eggNOG" id="COG1466">
    <property type="taxonomic scope" value="Bacteria"/>
</dbReference>
<dbReference type="HOGENOM" id="CLU_2653420_0_0_12"/>
<dbReference type="Proteomes" id="UP000000811">
    <property type="component" value="Chromosome"/>
</dbReference>
<reference key="1">
    <citation type="journal article" date="1998" name="Science">
        <title>Complete genome sequence of Treponema pallidum, the syphilis spirochete.</title>
        <authorList>
            <person name="Fraser C.M."/>
            <person name="Norris S.J."/>
            <person name="Weinstock G.M."/>
            <person name="White O."/>
            <person name="Sutton G.G."/>
            <person name="Dodson R.J."/>
            <person name="Gwinn M.L."/>
            <person name="Hickey E.K."/>
            <person name="Clayton R.A."/>
            <person name="Ketchum K.A."/>
            <person name="Sodergren E."/>
            <person name="Hardham J.M."/>
            <person name="McLeod M.P."/>
            <person name="Salzberg S.L."/>
            <person name="Peterson J.D."/>
            <person name="Khalak H.G."/>
            <person name="Richardson D.L."/>
            <person name="Howell J.K."/>
            <person name="Chidambaram M."/>
            <person name="Utterback T.R."/>
            <person name="McDonald L.A."/>
            <person name="Artiach P."/>
            <person name="Bowman C."/>
            <person name="Cotton M.D."/>
            <person name="Fujii C."/>
            <person name="Garland S.A."/>
            <person name="Hatch B."/>
            <person name="Horst K."/>
            <person name="Roberts K.M."/>
            <person name="Sandusky M."/>
            <person name="Weidman J.F."/>
            <person name="Smith H.O."/>
            <person name="Venter J.C."/>
        </authorList>
    </citation>
    <scope>NUCLEOTIDE SEQUENCE [LARGE SCALE GENOMIC DNA]</scope>
    <source>
        <strain>Nichols</strain>
    </source>
</reference>
<protein>
    <recommendedName>
        <fullName>Uncharacterized protein TP_0587</fullName>
    </recommendedName>
</protein>
<organism>
    <name type="scientific">Treponema pallidum (strain Nichols)</name>
    <dbReference type="NCBI Taxonomy" id="243276"/>
    <lineage>
        <taxon>Bacteria</taxon>
        <taxon>Pseudomonadati</taxon>
        <taxon>Spirochaetota</taxon>
        <taxon>Spirochaetia</taxon>
        <taxon>Spirochaetales</taxon>
        <taxon>Treponemataceae</taxon>
        <taxon>Treponema</taxon>
    </lineage>
</organism>
<gene>
    <name type="ordered locus">TP_0587</name>
</gene>
<keyword id="KW-1185">Reference proteome</keyword>
<proteinExistence type="predicted"/>